<comment type="subcellular location">
    <subcellularLocation>
        <location evidence="1">Periplasm</location>
    </subcellularLocation>
</comment>
<comment type="similarity">
    <text evidence="1">Belongs to the UPF0312 family. Type 1 subfamily.</text>
</comment>
<name>YCEI_SALG2</name>
<proteinExistence type="inferred from homology"/>
<gene>
    <name evidence="1" type="primary">yceI</name>
    <name type="ordered locus">SG1965</name>
</gene>
<protein>
    <recommendedName>
        <fullName evidence="1">Protein YceI</fullName>
    </recommendedName>
</protein>
<organism>
    <name type="scientific">Salmonella gallinarum (strain 287/91 / NCTC 13346)</name>
    <dbReference type="NCBI Taxonomy" id="550538"/>
    <lineage>
        <taxon>Bacteria</taxon>
        <taxon>Pseudomonadati</taxon>
        <taxon>Pseudomonadota</taxon>
        <taxon>Gammaproteobacteria</taxon>
        <taxon>Enterobacterales</taxon>
        <taxon>Enterobacteriaceae</taxon>
        <taxon>Salmonella</taxon>
    </lineage>
</organism>
<accession>B5RBE3</accession>
<evidence type="ECO:0000255" key="1">
    <source>
        <dbReference type="HAMAP-Rule" id="MF_00780"/>
    </source>
</evidence>
<keyword id="KW-0574">Periplasm</keyword>
<keyword id="KW-0732">Signal</keyword>
<reference key="1">
    <citation type="journal article" date="2008" name="Genome Res.">
        <title>Comparative genome analysis of Salmonella enteritidis PT4 and Salmonella gallinarum 287/91 provides insights into evolutionary and host adaptation pathways.</title>
        <authorList>
            <person name="Thomson N.R."/>
            <person name="Clayton D.J."/>
            <person name="Windhorst D."/>
            <person name="Vernikos G."/>
            <person name="Davidson S."/>
            <person name="Churcher C."/>
            <person name="Quail M.A."/>
            <person name="Stevens M."/>
            <person name="Jones M.A."/>
            <person name="Watson M."/>
            <person name="Barron A."/>
            <person name="Layton A."/>
            <person name="Pickard D."/>
            <person name="Kingsley R.A."/>
            <person name="Bignell A."/>
            <person name="Clark L."/>
            <person name="Harris B."/>
            <person name="Ormond D."/>
            <person name="Abdellah Z."/>
            <person name="Brooks K."/>
            <person name="Cherevach I."/>
            <person name="Chillingworth T."/>
            <person name="Woodward J."/>
            <person name="Norberczak H."/>
            <person name="Lord A."/>
            <person name="Arrowsmith C."/>
            <person name="Jagels K."/>
            <person name="Moule S."/>
            <person name="Mungall K."/>
            <person name="Saunders M."/>
            <person name="Whitehead S."/>
            <person name="Chabalgoity J.A."/>
            <person name="Maskell D."/>
            <person name="Humphreys T."/>
            <person name="Roberts M."/>
            <person name="Barrow P.A."/>
            <person name="Dougan G."/>
            <person name="Parkhill J."/>
        </authorList>
    </citation>
    <scope>NUCLEOTIDE SEQUENCE [LARGE SCALE GENOMIC DNA]</scope>
    <source>
        <strain>287/91 / NCTC 13346</strain>
    </source>
</reference>
<dbReference type="EMBL" id="AM933173">
    <property type="protein sequence ID" value="CAR37815.1"/>
    <property type="molecule type" value="Genomic_DNA"/>
</dbReference>
<dbReference type="RefSeq" id="WP_000739886.1">
    <property type="nucleotide sequence ID" value="NC_011274.1"/>
</dbReference>
<dbReference type="SMR" id="B5RBE3"/>
<dbReference type="KEGG" id="seg:SG1965"/>
<dbReference type="HOGENOM" id="CLU_071003_1_2_6"/>
<dbReference type="Proteomes" id="UP000008321">
    <property type="component" value="Chromosome"/>
</dbReference>
<dbReference type="GO" id="GO:0042597">
    <property type="term" value="C:periplasmic space"/>
    <property type="evidence" value="ECO:0007669"/>
    <property type="project" value="UniProtKB-SubCell"/>
</dbReference>
<dbReference type="Gene3D" id="2.40.128.110">
    <property type="entry name" value="Lipid/polyisoprenoid-binding, YceI-like"/>
    <property type="match status" value="1"/>
</dbReference>
<dbReference type="HAMAP" id="MF_00780">
    <property type="entry name" value="UPF0312"/>
    <property type="match status" value="1"/>
</dbReference>
<dbReference type="InterPro" id="IPR007372">
    <property type="entry name" value="Lipid/polyisoprenoid-bd_YceI"/>
</dbReference>
<dbReference type="InterPro" id="IPR036761">
    <property type="entry name" value="TTHA0802/YceI-like_sf"/>
</dbReference>
<dbReference type="InterPro" id="IPR023480">
    <property type="entry name" value="UPF0312/YceI"/>
</dbReference>
<dbReference type="NCBIfam" id="NF002994">
    <property type="entry name" value="PRK03757.1"/>
    <property type="match status" value="1"/>
</dbReference>
<dbReference type="PANTHER" id="PTHR34406">
    <property type="entry name" value="PROTEIN YCEI"/>
    <property type="match status" value="1"/>
</dbReference>
<dbReference type="PANTHER" id="PTHR34406:SF1">
    <property type="entry name" value="PROTEIN YCEI"/>
    <property type="match status" value="1"/>
</dbReference>
<dbReference type="Pfam" id="PF04264">
    <property type="entry name" value="YceI"/>
    <property type="match status" value="1"/>
</dbReference>
<dbReference type="SMART" id="SM00867">
    <property type="entry name" value="YceI"/>
    <property type="match status" value="1"/>
</dbReference>
<dbReference type="SUPFAM" id="SSF101874">
    <property type="entry name" value="YceI-like"/>
    <property type="match status" value="1"/>
</dbReference>
<sequence>MKKNLLGFTLASLLFTTGSAVAAEYKIDKEGQHAFVNFRIQHLGYSWLYGTFKDFDGTFTFDEKNPSADKVNVTINTNSVDTNHAERDKHLRSAEFLNVAKFPQATFTSTSVKKEGDELDITGNLTLNGVTKPVTLEAKLMGQGDDPWGGKRAGFEAEGKIKLKDFNITTDLGPASQEVELIISVEGVQQK</sequence>
<feature type="signal peptide" evidence="1">
    <location>
        <begin position="1"/>
        <end position="22"/>
    </location>
</feature>
<feature type="chain" id="PRO_5000398312" description="Protein YceI">
    <location>
        <begin position="23"/>
        <end position="191"/>
    </location>
</feature>